<organism>
    <name type="scientific">Pseudomonas putida</name>
    <name type="common">Arthrobacter siderocapsulatus</name>
    <dbReference type="NCBI Taxonomy" id="303"/>
    <lineage>
        <taxon>Bacteria</taxon>
        <taxon>Pseudomonadati</taxon>
        <taxon>Pseudomonadota</taxon>
        <taxon>Gammaproteobacteria</taxon>
        <taxon>Pseudomonadales</taxon>
        <taxon>Pseudomonadaceae</taxon>
        <taxon>Pseudomonas</taxon>
    </lineage>
</organism>
<proteinExistence type="evidence at transcript level"/>
<evidence type="ECO:0000255" key="1"/>
<evidence type="ECO:0000269" key="2">
    <source>
    </source>
</evidence>
<evidence type="ECO:0000305" key="3"/>
<gene>
    <name type="primary">srpB</name>
</gene>
<name>SRPB_PSEPU</name>
<keyword id="KW-0997">Cell inner membrane</keyword>
<keyword id="KW-1003">Cell membrane</keyword>
<keyword id="KW-0472">Membrane</keyword>
<keyword id="KW-0812">Transmembrane</keyword>
<keyword id="KW-1133">Transmembrane helix</keyword>
<keyword id="KW-0813">Transport</keyword>
<sequence>MSRFFIDRPIFAWVLAIVAMLAGALSLAKMPISQYPNIAAPAVSIQVSYPGASAQTVQDTVVQVIEQQLSGLDGFRYMSAESASDGSMTIIVTFEQGTDPDIAQVQVQNKLQLATPRLPEEVQRQGLRVVKYQMNFFLVMSLVDRSGKLDNFDLGNLIASQLQDPISRIPGVGDFQLFGSPYAMRIWLDPGKLNSYQLTPTDVASAIREQNVQVSSGQLGGLPTRSGVQLNATVLGKTRMTTPSQFDEILVKVNPDGSQVRVKDVGRAELGADSFAISAQYKDSPTASLALRLSTGGNLLETVDAVKKLMEQQKAYLPDGVEVIYPYDTTPVVEASIESVVHTIFEAVVLVFLVMYLFLQSFRATLIPTLAVPVVLLATFALLPYFGLNINVLTMYAMVLAIGLLVDDAIVVVENVERLMHDEGLSPLEATRKSMDQISGALVGIGMVLSAVFVPMAFFGGSAGIIYQQFAITIVVCMGLSILVALVFTPALCVTILKAPEGNSHHERKGFFGWFNRIFDRGTRRFERGVGAMLKGRGRYLLAFLLITGGTGYLFTQIPKAFLPNEDQGLMMIEVRTPANASAERTEGVLQEVRDYLANDEGALVEHFMTVNGFNFAGRGQNSGLVLITFKDWKERHGAGQDVFSIAQRANQHFAKIKDASVMAFVPPAILEMGNAMGFNLYLQDNLGLGHEALMAARNQFLQLASQNPKLQAVRPNGKDDEPQFQVNIDDEKARALQVSIASINETMSAAWGSMYVNDFIDRGRVKRVYVQGEDISRISPEDFDKWYVRNSLGQMVPFSAFATGEWVNGSPKLERYGGISSLNILGEPAPGYSTGDAMIAIAEIMQQLPAGIGLSYTGLSYEEIQTGDQAPLLYALTVLIVFLCLAALYESWSVPVSVIMVVPLGILGAVLATLWRDLTADVYFQVGLMTTVGLSAKNAILIVEFAKELYEKEGYPIVKAAIEAAKLRLRPILMTSLAFTFGVLPMAIASGAGAGSQHSIATGVVGGMITATVLAVFFVPLFYVVVVKLFEGLMKRKPNAVKEVTHEV</sequence>
<comment type="function">
    <text>The inner membrane transporter component of an organic solvent efflux pump. Involved in export of a number of low log POW compounds including hexane (log POW 3.5), toluene (log POW 2.5) and dimethylphthalate (log POW 2.3). The solvent resistance phenotype has been postulated to depend on the operon expression level.</text>
</comment>
<comment type="subcellular location">
    <subcellularLocation>
        <location evidence="3">Cell inner membrane</location>
        <topology evidence="3">Multi-pass membrane protein</topology>
    </subcellularLocation>
</comment>
<comment type="induction">
    <text evidence="2">Low constitutive expression; the srpABC operon is further induced up to 17-fold by organic solvents (e.g. toluene and aliphatic solvents and alcohols) but not by antibiotics, heavy metals, pH, temperature, high NaCl or 60 mM acetic acid.</text>
</comment>
<comment type="similarity">
    <text evidence="3">Belongs to the resistance-nodulation-cell division (RND) (TC 2.A.6) family.</text>
</comment>
<reference key="1">
    <citation type="journal article" date="1998" name="J. Biol. Chem.">
        <title>Identification and molecular characterization of an efflux pump involved in Pseudomonas putida S12 solvent tolerance.</title>
        <authorList>
            <person name="Kieboom J."/>
            <person name="Dennis J.J."/>
            <person name="de Bont J.A.M."/>
            <person name="Zylstra G.J."/>
        </authorList>
    </citation>
    <scope>NUCLEOTIDE SEQUENCE [GENOMIC DNA]</scope>
    <scope>EFFLUX PUMP SUBSTRATES</scope>
    <source>
        <strain>ATCC 700801 / S12</strain>
    </source>
</reference>
<reference key="2">
    <citation type="journal article" date="1998" name="J. Bacteriol.">
        <title>Active efflux of organic solvents by Pseudomonas putida S12 is induced by solvents.</title>
        <authorList>
            <person name="Kieboom J."/>
            <person name="Dennis J.J."/>
            <person name="Zylstra G.J."/>
            <person name="de Bont J.A.M."/>
        </authorList>
    </citation>
    <scope>INDUCTION</scope>
    <source>
        <strain>ATCC 700801 / S12</strain>
    </source>
</reference>
<reference key="3">
    <citation type="submission" date="1999-02" db="EMBL/GenBank/DDBJ databases">
        <authorList>
            <person name="Kieboom J."/>
            <person name="Dennis J.J."/>
            <person name="Zylstra G.J."/>
            <person name="de Bont J.A.M."/>
        </authorList>
    </citation>
    <scope>NUCLEOTIDE SEQUENCE [GENOMIC DNA]</scope>
    <source>
        <strain>ATCC 700801 / S12</strain>
    </source>
</reference>
<dbReference type="EMBL" id="AF029405">
    <property type="protein sequence ID" value="AAD12176.1"/>
    <property type="molecule type" value="Genomic_DNA"/>
</dbReference>
<dbReference type="RefSeq" id="WP_014003970.1">
    <property type="nucleotide sequence ID" value="NZ_SPUU01000035.1"/>
</dbReference>
<dbReference type="SMR" id="O31100"/>
<dbReference type="OrthoDB" id="9757904at2"/>
<dbReference type="GO" id="GO:0005886">
    <property type="term" value="C:plasma membrane"/>
    <property type="evidence" value="ECO:0007669"/>
    <property type="project" value="UniProtKB-SubCell"/>
</dbReference>
<dbReference type="GO" id="GO:0015562">
    <property type="term" value="F:efflux transmembrane transporter activity"/>
    <property type="evidence" value="ECO:0007669"/>
    <property type="project" value="InterPro"/>
</dbReference>
<dbReference type="GO" id="GO:0042910">
    <property type="term" value="F:xenobiotic transmembrane transporter activity"/>
    <property type="evidence" value="ECO:0007669"/>
    <property type="project" value="TreeGrafter"/>
</dbReference>
<dbReference type="FunFam" id="1.20.1640.10:FF:000001">
    <property type="entry name" value="Efflux pump membrane transporter"/>
    <property type="match status" value="1"/>
</dbReference>
<dbReference type="FunFam" id="3.30.2090.10:FF:000001">
    <property type="entry name" value="Efflux pump membrane transporter"/>
    <property type="match status" value="1"/>
</dbReference>
<dbReference type="FunFam" id="3.30.2090.10:FF:000002">
    <property type="entry name" value="Efflux pump membrane transporter"/>
    <property type="match status" value="1"/>
</dbReference>
<dbReference type="FunFam" id="3.30.70.1430:FF:000001">
    <property type="entry name" value="Efflux pump membrane transporter"/>
    <property type="match status" value="1"/>
</dbReference>
<dbReference type="FunFam" id="3.30.70.1430:FF:000002">
    <property type="entry name" value="Efflux pump membrane transporter"/>
    <property type="match status" value="1"/>
</dbReference>
<dbReference type="Gene3D" id="3.30.70.1430">
    <property type="entry name" value="Multidrug efflux transporter AcrB pore domain"/>
    <property type="match status" value="2"/>
</dbReference>
<dbReference type="Gene3D" id="3.30.70.1440">
    <property type="entry name" value="Multidrug efflux transporter AcrB pore domain"/>
    <property type="match status" value="1"/>
</dbReference>
<dbReference type="Gene3D" id="3.30.70.1320">
    <property type="entry name" value="Multidrug efflux transporter AcrB pore domain like"/>
    <property type="match status" value="1"/>
</dbReference>
<dbReference type="Gene3D" id="3.30.2090.10">
    <property type="entry name" value="Multidrug efflux transporter AcrB TolC docking domain, DN and DC subdomains"/>
    <property type="match status" value="2"/>
</dbReference>
<dbReference type="Gene3D" id="1.20.1640.10">
    <property type="entry name" value="Multidrug efflux transporter AcrB transmembrane domain"/>
    <property type="match status" value="2"/>
</dbReference>
<dbReference type="InterPro" id="IPR027463">
    <property type="entry name" value="AcrB_DN_DC_subdom"/>
</dbReference>
<dbReference type="InterPro" id="IPR001036">
    <property type="entry name" value="Acrflvin-R"/>
</dbReference>
<dbReference type="InterPro" id="IPR004764">
    <property type="entry name" value="MdtF-like"/>
</dbReference>
<dbReference type="NCBIfam" id="TIGR00915">
    <property type="entry name" value="2A0602"/>
    <property type="match status" value="1"/>
</dbReference>
<dbReference type="NCBIfam" id="NF000282">
    <property type="entry name" value="RND_permease_1"/>
    <property type="match status" value="1"/>
</dbReference>
<dbReference type="PANTHER" id="PTHR32063">
    <property type="match status" value="1"/>
</dbReference>
<dbReference type="PANTHER" id="PTHR32063:SF13">
    <property type="entry name" value="MULTIDRUG EFFLUX PUMP SUBUNIT ACRB-RELATED"/>
    <property type="match status" value="1"/>
</dbReference>
<dbReference type="Pfam" id="PF00873">
    <property type="entry name" value="ACR_tran"/>
    <property type="match status" value="1"/>
</dbReference>
<dbReference type="PRINTS" id="PR00702">
    <property type="entry name" value="ACRIFLAVINRP"/>
</dbReference>
<dbReference type="SUPFAM" id="SSF82693">
    <property type="entry name" value="Multidrug efflux transporter AcrB pore domain, PN1, PN2, PC1 and PC2 subdomains"/>
    <property type="match status" value="3"/>
</dbReference>
<dbReference type="SUPFAM" id="SSF82714">
    <property type="entry name" value="Multidrug efflux transporter AcrB TolC docking domain, DN and DC subdomains"/>
    <property type="match status" value="2"/>
</dbReference>
<dbReference type="SUPFAM" id="SSF82866">
    <property type="entry name" value="Multidrug efflux transporter AcrB transmembrane domain"/>
    <property type="match status" value="2"/>
</dbReference>
<feature type="chain" id="PRO_0000161855" description="Solvent-resistant pump membrane transporter SrpB">
    <location>
        <begin position="1"/>
        <end position="1049"/>
    </location>
</feature>
<feature type="transmembrane region" description="Helical" evidence="1">
    <location>
        <begin position="10"/>
        <end position="30"/>
    </location>
</feature>
<feature type="transmembrane region" description="Helical" evidence="1">
    <location>
        <begin position="339"/>
        <end position="359"/>
    </location>
</feature>
<feature type="transmembrane region" description="Helical" evidence="1">
    <location>
        <begin position="366"/>
        <end position="386"/>
    </location>
</feature>
<feature type="transmembrane region" description="Helical" evidence="1">
    <location>
        <begin position="392"/>
        <end position="412"/>
    </location>
</feature>
<feature type="transmembrane region" description="Helical" evidence="1">
    <location>
        <begin position="440"/>
        <end position="460"/>
    </location>
</feature>
<feature type="transmembrane region" description="Helical" evidence="1">
    <location>
        <begin position="470"/>
        <end position="490"/>
    </location>
</feature>
<feature type="transmembrane region" description="Helical" evidence="1">
    <location>
        <begin position="542"/>
        <end position="562"/>
    </location>
</feature>
<feature type="transmembrane region" description="Helical" evidence="1">
    <location>
        <begin position="871"/>
        <end position="891"/>
    </location>
</feature>
<feature type="transmembrane region" description="Helical" evidence="1">
    <location>
        <begin position="895"/>
        <end position="915"/>
    </location>
</feature>
<feature type="transmembrane region" description="Helical" evidence="1">
    <location>
        <begin position="927"/>
        <end position="947"/>
    </location>
</feature>
<feature type="transmembrane region" description="Helical" evidence="1">
    <location>
        <begin position="973"/>
        <end position="993"/>
    </location>
</feature>
<feature type="transmembrane region" description="Helical" evidence="1">
    <location>
        <begin position="1008"/>
        <end position="1028"/>
    </location>
</feature>
<protein>
    <recommendedName>
        <fullName>Solvent-resistant pump membrane transporter SrpB</fullName>
    </recommendedName>
</protein>
<accession>O31100</accession>